<accession>B7LPS0</accession>
<proteinExistence type="inferred from homology"/>
<organism>
    <name type="scientific">Escherichia fergusonii (strain ATCC 35469 / DSM 13698 / CCUG 18766 / IAM 14443 / JCM 21226 / LMG 7866 / NBRC 102419 / NCTC 12128 / CDC 0568-73)</name>
    <dbReference type="NCBI Taxonomy" id="585054"/>
    <lineage>
        <taxon>Bacteria</taxon>
        <taxon>Pseudomonadati</taxon>
        <taxon>Pseudomonadota</taxon>
        <taxon>Gammaproteobacteria</taxon>
        <taxon>Enterobacterales</taxon>
        <taxon>Enterobacteriaceae</taxon>
        <taxon>Escherichia</taxon>
    </lineage>
</organism>
<gene>
    <name evidence="1" type="primary">yggU</name>
    <name type="ordered locus">EFER_2892</name>
</gene>
<evidence type="ECO:0000255" key="1">
    <source>
        <dbReference type="HAMAP-Rule" id="MF_00634"/>
    </source>
</evidence>
<feature type="chain" id="PRO_1000130686" description="UPF0235 protein YggU">
    <location>
        <begin position="1"/>
        <end position="96"/>
    </location>
</feature>
<comment type="similarity">
    <text evidence="1">Belongs to the UPF0235 family.</text>
</comment>
<reference key="1">
    <citation type="journal article" date="2009" name="PLoS Genet.">
        <title>Organised genome dynamics in the Escherichia coli species results in highly diverse adaptive paths.</title>
        <authorList>
            <person name="Touchon M."/>
            <person name="Hoede C."/>
            <person name="Tenaillon O."/>
            <person name="Barbe V."/>
            <person name="Baeriswyl S."/>
            <person name="Bidet P."/>
            <person name="Bingen E."/>
            <person name="Bonacorsi S."/>
            <person name="Bouchier C."/>
            <person name="Bouvet O."/>
            <person name="Calteau A."/>
            <person name="Chiapello H."/>
            <person name="Clermont O."/>
            <person name="Cruveiller S."/>
            <person name="Danchin A."/>
            <person name="Diard M."/>
            <person name="Dossat C."/>
            <person name="Karoui M.E."/>
            <person name="Frapy E."/>
            <person name="Garry L."/>
            <person name="Ghigo J.M."/>
            <person name="Gilles A.M."/>
            <person name="Johnson J."/>
            <person name="Le Bouguenec C."/>
            <person name="Lescat M."/>
            <person name="Mangenot S."/>
            <person name="Martinez-Jehanne V."/>
            <person name="Matic I."/>
            <person name="Nassif X."/>
            <person name="Oztas S."/>
            <person name="Petit M.A."/>
            <person name="Pichon C."/>
            <person name="Rouy Z."/>
            <person name="Ruf C.S."/>
            <person name="Schneider D."/>
            <person name="Tourret J."/>
            <person name="Vacherie B."/>
            <person name="Vallenet D."/>
            <person name="Medigue C."/>
            <person name="Rocha E.P.C."/>
            <person name="Denamur E."/>
        </authorList>
    </citation>
    <scope>NUCLEOTIDE SEQUENCE [LARGE SCALE GENOMIC DNA]</scope>
    <source>
        <strain>ATCC 35469 / DSM 13698 / BCRC 15582 / CCUG 18766 / IAM 14443 / JCM 21226 / LMG 7866 / NBRC 102419 / NCTC 12128 / CDC 0568-73</strain>
    </source>
</reference>
<name>YGGU_ESCF3</name>
<protein>
    <recommendedName>
        <fullName evidence="1">UPF0235 protein YggU</fullName>
    </recommendedName>
</protein>
<sequence>MSAVTVNDDGLVLRLYIQPKASRDSIVGLHGDEVKVAITAPPVDGQANSHLVKFLGKQFRVAKSQVVIEKGELGRHKQIKIINPQQIPPEIAALIN</sequence>
<dbReference type="EMBL" id="CU928158">
    <property type="protein sequence ID" value="CAQ90385.1"/>
    <property type="molecule type" value="Genomic_DNA"/>
</dbReference>
<dbReference type="RefSeq" id="WP_001277222.1">
    <property type="nucleotide sequence ID" value="NC_011740.1"/>
</dbReference>
<dbReference type="SMR" id="B7LPS0"/>
<dbReference type="GeneID" id="86861043"/>
<dbReference type="KEGG" id="efe:EFER_2892"/>
<dbReference type="HOGENOM" id="CLU_130694_5_0_6"/>
<dbReference type="OrthoDB" id="9800587at2"/>
<dbReference type="Proteomes" id="UP000000745">
    <property type="component" value="Chromosome"/>
</dbReference>
<dbReference type="GO" id="GO:0005737">
    <property type="term" value="C:cytoplasm"/>
    <property type="evidence" value="ECO:0007669"/>
    <property type="project" value="TreeGrafter"/>
</dbReference>
<dbReference type="Gene3D" id="3.30.1200.10">
    <property type="entry name" value="YggU-like"/>
    <property type="match status" value="1"/>
</dbReference>
<dbReference type="HAMAP" id="MF_00634">
    <property type="entry name" value="UPF0235"/>
    <property type="match status" value="1"/>
</dbReference>
<dbReference type="InterPro" id="IPR003746">
    <property type="entry name" value="DUF167"/>
</dbReference>
<dbReference type="InterPro" id="IPR036591">
    <property type="entry name" value="YggU-like_sf"/>
</dbReference>
<dbReference type="NCBIfam" id="TIGR00251">
    <property type="entry name" value="DUF167 family protein"/>
    <property type="match status" value="1"/>
</dbReference>
<dbReference type="NCBIfam" id="NF003466">
    <property type="entry name" value="PRK05090.1"/>
    <property type="match status" value="1"/>
</dbReference>
<dbReference type="PANTHER" id="PTHR13420">
    <property type="entry name" value="UPF0235 PROTEIN C15ORF40"/>
    <property type="match status" value="1"/>
</dbReference>
<dbReference type="PANTHER" id="PTHR13420:SF7">
    <property type="entry name" value="UPF0235 PROTEIN C15ORF40"/>
    <property type="match status" value="1"/>
</dbReference>
<dbReference type="Pfam" id="PF02594">
    <property type="entry name" value="DUF167"/>
    <property type="match status" value="1"/>
</dbReference>
<dbReference type="SMART" id="SM01152">
    <property type="entry name" value="DUF167"/>
    <property type="match status" value="1"/>
</dbReference>
<dbReference type="SUPFAM" id="SSF69786">
    <property type="entry name" value="YggU-like"/>
    <property type="match status" value="1"/>
</dbReference>